<dbReference type="EMBL" id="X73112">
    <property type="protein sequence ID" value="CAA51539.1"/>
    <property type="molecule type" value="Genomic_DNA"/>
</dbReference>
<dbReference type="GO" id="GO:0005886">
    <property type="term" value="C:plasma membrane"/>
    <property type="evidence" value="ECO:0007669"/>
    <property type="project" value="UniProtKB-SubCell"/>
</dbReference>
<dbReference type="GO" id="GO:0015097">
    <property type="term" value="F:mercury ion transmembrane transporter activity"/>
    <property type="evidence" value="ECO:0007669"/>
    <property type="project" value="InterPro"/>
</dbReference>
<dbReference type="GO" id="GO:0046872">
    <property type="term" value="F:metal ion binding"/>
    <property type="evidence" value="ECO:0007669"/>
    <property type="project" value="UniProtKB-KW"/>
</dbReference>
<dbReference type="Gene3D" id="1.10.287.910">
    <property type="entry name" value="bacterial mercury transporter, merf"/>
    <property type="match status" value="1"/>
</dbReference>
<dbReference type="InterPro" id="IPR003457">
    <property type="entry name" value="Transprt_MerT"/>
</dbReference>
<dbReference type="NCBIfam" id="NF010314">
    <property type="entry name" value="PRK13751.2"/>
    <property type="match status" value="1"/>
</dbReference>
<dbReference type="Pfam" id="PF02411">
    <property type="entry name" value="MerT"/>
    <property type="match status" value="1"/>
</dbReference>
<sequence length="116" mass="12407">MSEPQNGRGALFTGGLAAILASACCLGPLVLIALGFSGAWIGNLTVLEPYRPIFIGVALVALFFAWRRIYRPSAACKPGEVCAIPQVPATYKLIFWGVAVLVLVALGFPYVVPFFY</sequence>
<feature type="chain" id="PRO_0000096431" description="Mercuric transport protein MerT">
    <location>
        <begin position="1"/>
        <end position="116"/>
    </location>
</feature>
<feature type="transmembrane region" description="Helical" evidence="2">
    <location>
        <begin position="16"/>
        <end position="36"/>
    </location>
</feature>
<feature type="transmembrane region" description="Helical" evidence="2">
    <location>
        <begin position="46"/>
        <end position="66"/>
    </location>
</feature>
<feature type="transmembrane region" description="Helical" evidence="2">
    <location>
        <begin position="94"/>
        <end position="114"/>
    </location>
</feature>
<feature type="binding site" evidence="1">
    <location>
        <position position="24"/>
    </location>
    <ligand>
        <name>Hg(2+)</name>
        <dbReference type="ChEBI" id="CHEBI:16793"/>
    </ligand>
</feature>
<feature type="binding site" evidence="1">
    <location>
        <position position="25"/>
    </location>
    <ligand>
        <name>Hg(2+)</name>
        <dbReference type="ChEBI" id="CHEBI:16793"/>
    </ligand>
</feature>
<feature type="binding site" evidence="1">
    <location>
        <position position="76"/>
    </location>
    <ligand>
        <name>Hg(2+)</name>
        <dbReference type="ChEBI" id="CHEBI:16793"/>
    </ligand>
</feature>
<feature type="binding site" evidence="1">
    <location>
        <position position="82"/>
    </location>
    <ligand>
        <name>Hg(2+)</name>
        <dbReference type="ChEBI" id="CHEBI:16793"/>
    </ligand>
</feature>
<gene>
    <name evidence="3" type="primary">merT</name>
</gene>
<accession>Q51769</accession>
<reference key="1">
    <citation type="journal article" date="1994" name="Gene">
        <title>The sequence of the mer operon of pMER327/419 and transposon ends of pMER327/419, 330 and 05.</title>
        <authorList>
            <person name="Hobman J."/>
            <person name="Kholodii G."/>
            <person name="Nikiforov V."/>
            <person name="Ritchie D.A."/>
            <person name="Strike P."/>
            <person name="Yurieva O."/>
        </authorList>
    </citation>
    <scope>NUCLEOTIDE SEQUENCE [GENOMIC DNA]</scope>
</reference>
<protein>
    <recommendedName>
        <fullName evidence="1">Mercuric transport protein MerT</fullName>
    </recommendedName>
    <alternativeName>
        <fullName evidence="1">Mercury ion transport protein</fullName>
    </alternativeName>
</protein>
<keyword id="KW-0997">Cell inner membrane</keyword>
<keyword id="KW-1003">Cell membrane</keyword>
<keyword id="KW-0472">Membrane</keyword>
<keyword id="KW-0475">Mercuric resistance</keyword>
<keyword id="KW-0476">Mercury</keyword>
<keyword id="KW-0479">Metal-binding</keyword>
<keyword id="KW-0614">Plasmid</keyword>
<keyword id="KW-0812">Transmembrane</keyword>
<keyword id="KW-1133">Transmembrane helix</keyword>
<keyword id="KW-0813">Transport</keyword>
<geneLocation type="plasmid">
    <name>pMER327</name>
</geneLocation>
<name>MERT_PSEFL</name>
<evidence type="ECO:0000250" key="1">
    <source>
        <dbReference type="UniProtKB" id="P04140"/>
    </source>
</evidence>
<evidence type="ECO:0000255" key="2"/>
<evidence type="ECO:0000303" key="3">
    <source>
    </source>
</evidence>
<evidence type="ECO:0000305" key="4"/>
<comment type="function">
    <text evidence="1">Involved in mercury resistance. Probably transfers a mercuric ion from the periplasmic Hg(2+)-binding protein MerP to the cytoplasmic mercuric reductase MerA.</text>
</comment>
<comment type="subcellular location">
    <subcellularLocation>
        <location evidence="4">Cell inner membrane</location>
        <topology evidence="2">Multi-pass membrane protein</topology>
    </subcellularLocation>
</comment>
<comment type="similarity">
    <text evidence="4">Belongs to the MerT family.</text>
</comment>
<organism>
    <name type="scientific">Pseudomonas fluorescens</name>
    <dbReference type="NCBI Taxonomy" id="294"/>
    <lineage>
        <taxon>Bacteria</taxon>
        <taxon>Pseudomonadati</taxon>
        <taxon>Pseudomonadota</taxon>
        <taxon>Gammaproteobacteria</taxon>
        <taxon>Pseudomonadales</taxon>
        <taxon>Pseudomonadaceae</taxon>
        <taxon>Pseudomonas</taxon>
    </lineage>
</organism>
<proteinExistence type="inferred from homology"/>